<name>VKT2_PALCA</name>
<comment type="function">
    <text evidence="2">Weak serine protease inhibitor that has been tested on both trypsin and elastase (PubMed:29285938). In vivo, is not lethal to zebrafish larvae (PubMed:29285938).</text>
</comment>
<comment type="subcellular location">
    <subcellularLocation>
        <location evidence="4">Secreted</location>
    </subcellularLocation>
    <subcellularLocation>
        <location evidence="4">Nematocyst</location>
    </subcellularLocation>
</comment>
<comment type="toxic dose">
    <text evidence="2">LD(50) is &gt;100 uM against zebrafish larvae.</text>
</comment>
<comment type="similarity">
    <text evidence="4">Belongs to the venom Kunitz-type family. Sea anemone type 2 potassium channel toxin subfamily.</text>
</comment>
<protein>
    <recommendedName>
        <fullName evidence="3">Kunitz-like toxin PcKuz2</fullName>
    </recommendedName>
    <alternativeName>
        <fullName evidence="5">Kunitz-type serine protease inhibitor PcKuz2</fullName>
    </alternativeName>
    <alternativeName>
        <fullName evidence="4">PI-sphenopitoxin-Pc1b</fullName>
        <shortName evidence="4">PI-SPTX-Pc1b</shortName>
    </alternativeName>
</protein>
<accession>P0DQR0</accession>
<feature type="chain" id="PRO_0000453750" description="Kunitz-like toxin PcKuz2" evidence="5">
    <location>
        <begin position="1"/>
        <end position="51"/>
    </location>
</feature>
<feature type="disulfide bond" evidence="1">
    <location>
        <begin position="1"/>
        <end position="51"/>
    </location>
</feature>
<feature type="disulfide bond" evidence="1">
    <location>
        <begin position="10"/>
        <end position="34"/>
    </location>
</feature>
<feature type="disulfide bond" evidence="1">
    <location>
        <begin position="26"/>
        <end position="47"/>
    </location>
</feature>
<proteinExistence type="inferred from homology"/>
<keyword id="KW-1015">Disulfide bond</keyword>
<keyword id="KW-0166">Nematocyst</keyword>
<keyword id="KW-0646">Protease inhibitor</keyword>
<keyword id="KW-0964">Secreted</keyword>
<keyword id="KW-0722">Serine protease inhibitor</keyword>
<dbReference type="SMR" id="P0DQR0"/>
<dbReference type="GO" id="GO:0005615">
    <property type="term" value="C:extracellular space"/>
    <property type="evidence" value="ECO:0007669"/>
    <property type="project" value="TreeGrafter"/>
</dbReference>
<dbReference type="GO" id="GO:0042151">
    <property type="term" value="C:nematocyst"/>
    <property type="evidence" value="ECO:0007669"/>
    <property type="project" value="UniProtKB-SubCell"/>
</dbReference>
<dbReference type="GO" id="GO:0004867">
    <property type="term" value="F:serine-type endopeptidase inhibitor activity"/>
    <property type="evidence" value="ECO:0007669"/>
    <property type="project" value="UniProtKB-KW"/>
</dbReference>
<dbReference type="CDD" id="cd00109">
    <property type="entry name" value="Kunitz-type"/>
    <property type="match status" value="1"/>
</dbReference>
<dbReference type="Gene3D" id="4.10.410.10">
    <property type="entry name" value="Pancreatic trypsin inhibitor Kunitz domain"/>
    <property type="match status" value="1"/>
</dbReference>
<dbReference type="InterPro" id="IPR002223">
    <property type="entry name" value="Kunitz_BPTI"/>
</dbReference>
<dbReference type="InterPro" id="IPR036880">
    <property type="entry name" value="Kunitz_BPTI_sf"/>
</dbReference>
<dbReference type="InterPro" id="IPR020901">
    <property type="entry name" value="Prtase_inh_Kunz-CS"/>
</dbReference>
<dbReference type="InterPro" id="IPR050098">
    <property type="entry name" value="TFPI/VKTCI-like"/>
</dbReference>
<dbReference type="PANTHER" id="PTHR10083:SF374">
    <property type="entry name" value="BPTI_KUNITZ INHIBITOR DOMAIN-CONTAINING PROTEIN"/>
    <property type="match status" value="1"/>
</dbReference>
<dbReference type="PANTHER" id="PTHR10083">
    <property type="entry name" value="KUNITZ-TYPE PROTEASE INHIBITOR-RELATED"/>
    <property type="match status" value="1"/>
</dbReference>
<dbReference type="Pfam" id="PF00014">
    <property type="entry name" value="Kunitz_BPTI"/>
    <property type="match status" value="1"/>
</dbReference>
<dbReference type="PRINTS" id="PR00759">
    <property type="entry name" value="BASICPTASE"/>
</dbReference>
<dbReference type="SMART" id="SM00131">
    <property type="entry name" value="KU"/>
    <property type="match status" value="1"/>
</dbReference>
<dbReference type="SUPFAM" id="SSF57362">
    <property type="entry name" value="BPTI-like"/>
    <property type="match status" value="1"/>
</dbReference>
<dbReference type="PROSITE" id="PS00280">
    <property type="entry name" value="BPTI_KUNITZ_1"/>
    <property type="match status" value="1"/>
</dbReference>
<dbReference type="PROSITE" id="PS50279">
    <property type="entry name" value="BPTI_KUNITZ_2"/>
    <property type="match status" value="1"/>
</dbReference>
<organism>
    <name type="scientific">Palythoa caribaeorum</name>
    <name type="common">White encrusting zoanthid coral</name>
    <dbReference type="NCBI Taxonomy" id="134933"/>
    <lineage>
        <taxon>Eukaryota</taxon>
        <taxon>Metazoa</taxon>
        <taxon>Cnidaria</taxon>
        <taxon>Anthozoa</taxon>
        <taxon>Hexacorallia</taxon>
        <taxon>Zoantharia</taxon>
        <taxon>Sphenopidae</taxon>
        <taxon>Palythoa</taxon>
    </lineage>
</organism>
<sequence>CKIPANAGNCNNHQERWFYNSHNRKCETFLYSGCGANPNNFKSEKQCESTC</sequence>
<evidence type="ECO:0000255" key="1">
    <source>
        <dbReference type="PROSITE-ProRule" id="PRU00031"/>
    </source>
</evidence>
<evidence type="ECO:0000269" key="2">
    <source>
    </source>
</evidence>
<evidence type="ECO:0000303" key="3">
    <source>
    </source>
</evidence>
<evidence type="ECO:0000305" key="4"/>
<evidence type="ECO:0000305" key="5">
    <source>
    </source>
</evidence>
<reference key="1">
    <citation type="journal article" date="2018" name="J. Proteome Res.">
        <title>Novel kunitz-like peptides discovered in the zoanthid Palythoa caribaeorum through transcriptome sequencing.</title>
        <authorList>
            <person name="Liao Q."/>
            <person name="Li S."/>
            <person name="Siu S.W.I."/>
            <person name="Yang B."/>
            <person name="Huang C."/>
            <person name="Chan J.Y."/>
            <person name="Morlighem J.R.L."/>
            <person name="Wong C.T.T."/>
            <person name="Radis-Baptista G."/>
            <person name="Lee S.M."/>
        </authorList>
    </citation>
    <scope>NUCLEOTIDE SEQUENCE [MRNA]</scope>
    <scope>FUNCTION</scope>
    <scope>SYNTHESIS</scope>
    <scope>3D-STRUCTURE MODELING</scope>
    <scope>BIOASSAY</scope>
    <scope>TOXIC DOSE</scope>
</reference>